<sequence length="273" mass="29264">MTLDLQTTIEQAWENRANLSPVDASAEVRDAVEHTIDGLDLGRLRVAEKIDDQWIVHQWIKKAVLLSFRLHDNAVMGQGPLQFYDKVPTKFAGYGEAAFKAGGYRVVPPAVARRGAFIARNVVLMPSYVNIGAYVDEGTMVDTWATVGSCAQIGKNVHLSGGVGIGGVLEPLQANPTIIEDNCFIGARSEVVEGVVVEENSVLAMGVFLSQSTKIYDRATGKVSYGRVPSGSVVVPGSLPSEDGSHSLACAVIVKRVDAQTRAKTSINDLLRA</sequence>
<gene>
    <name evidence="1" type="primary">dapD</name>
    <name type="ordered locus">BP1764</name>
</gene>
<dbReference type="EC" id="2.3.1.117" evidence="1"/>
<dbReference type="EMBL" id="AJ009834">
    <property type="protein sequence ID" value="CAA08875.1"/>
    <property type="molecule type" value="Genomic_DNA"/>
</dbReference>
<dbReference type="EMBL" id="BX640416">
    <property type="protein sequence ID" value="CAE42051.1"/>
    <property type="molecule type" value="Genomic_DNA"/>
</dbReference>
<dbReference type="RefSeq" id="NP_880476.1">
    <property type="nucleotide sequence ID" value="NC_002929.2"/>
</dbReference>
<dbReference type="RefSeq" id="WP_003812536.1">
    <property type="nucleotide sequence ID" value="NZ_CP039022.1"/>
</dbReference>
<dbReference type="SMR" id="P0A4U8"/>
<dbReference type="STRING" id="257313.BP1764"/>
<dbReference type="PaxDb" id="257313-BP1764"/>
<dbReference type="GeneID" id="69602059"/>
<dbReference type="KEGG" id="bpe:BP1764"/>
<dbReference type="PATRIC" id="fig|257313.5.peg.1893"/>
<dbReference type="eggNOG" id="COG2171">
    <property type="taxonomic scope" value="Bacteria"/>
</dbReference>
<dbReference type="HOGENOM" id="CLU_050859_0_1_4"/>
<dbReference type="UniPathway" id="UPA00034">
    <property type="reaction ID" value="UER00019"/>
</dbReference>
<dbReference type="Proteomes" id="UP000002676">
    <property type="component" value="Chromosome"/>
</dbReference>
<dbReference type="GO" id="GO:0005737">
    <property type="term" value="C:cytoplasm"/>
    <property type="evidence" value="ECO:0007669"/>
    <property type="project" value="UniProtKB-SubCell"/>
</dbReference>
<dbReference type="GO" id="GO:0008666">
    <property type="term" value="F:2,3,4,5-tetrahydropyridine-2,6-dicarboxylate N-succinyltransferase activity"/>
    <property type="evidence" value="ECO:0007669"/>
    <property type="project" value="UniProtKB-UniRule"/>
</dbReference>
<dbReference type="GO" id="GO:0016779">
    <property type="term" value="F:nucleotidyltransferase activity"/>
    <property type="evidence" value="ECO:0007669"/>
    <property type="project" value="TreeGrafter"/>
</dbReference>
<dbReference type="GO" id="GO:0019877">
    <property type="term" value="P:diaminopimelate biosynthetic process"/>
    <property type="evidence" value="ECO:0007669"/>
    <property type="project" value="UniProtKB-UniRule"/>
</dbReference>
<dbReference type="GO" id="GO:0009089">
    <property type="term" value="P:lysine biosynthetic process via diaminopimelate"/>
    <property type="evidence" value="ECO:0007669"/>
    <property type="project" value="UniProtKB-UniRule"/>
</dbReference>
<dbReference type="CDD" id="cd03350">
    <property type="entry name" value="LbH_THP_succinylT"/>
    <property type="match status" value="1"/>
</dbReference>
<dbReference type="Gene3D" id="2.160.10.10">
    <property type="entry name" value="Hexapeptide repeat proteins"/>
    <property type="match status" value="1"/>
</dbReference>
<dbReference type="Gene3D" id="1.10.166.10">
    <property type="entry name" value="Tetrahydrodipicolinate-N-succinyltransferase, N-terminal domain"/>
    <property type="match status" value="1"/>
</dbReference>
<dbReference type="HAMAP" id="MF_00811">
    <property type="entry name" value="DapD"/>
    <property type="match status" value="1"/>
</dbReference>
<dbReference type="InterPro" id="IPR005664">
    <property type="entry name" value="DapD_Trfase_Hexpep_rpt_fam"/>
</dbReference>
<dbReference type="InterPro" id="IPR001451">
    <property type="entry name" value="Hexapep"/>
</dbReference>
<dbReference type="InterPro" id="IPR018357">
    <property type="entry name" value="Hexapep_transf_CS"/>
</dbReference>
<dbReference type="InterPro" id="IPR023180">
    <property type="entry name" value="THP_succinylTrfase_dom1"/>
</dbReference>
<dbReference type="InterPro" id="IPR037133">
    <property type="entry name" value="THP_succinylTrfase_N_sf"/>
</dbReference>
<dbReference type="InterPro" id="IPR011004">
    <property type="entry name" value="Trimer_LpxA-like_sf"/>
</dbReference>
<dbReference type="NCBIfam" id="TIGR00965">
    <property type="entry name" value="dapD"/>
    <property type="match status" value="1"/>
</dbReference>
<dbReference type="NCBIfam" id="NF008808">
    <property type="entry name" value="PRK11830.1"/>
    <property type="match status" value="1"/>
</dbReference>
<dbReference type="PANTHER" id="PTHR19136:SF52">
    <property type="entry name" value="2,3,4,5-TETRAHYDROPYRIDINE-2,6-DICARBOXYLATE N-SUCCINYLTRANSFERASE"/>
    <property type="match status" value="1"/>
</dbReference>
<dbReference type="PANTHER" id="PTHR19136">
    <property type="entry name" value="MOLYBDENUM COFACTOR GUANYLYLTRANSFERASE"/>
    <property type="match status" value="1"/>
</dbReference>
<dbReference type="Pfam" id="PF14602">
    <property type="entry name" value="Hexapep_2"/>
    <property type="match status" value="1"/>
</dbReference>
<dbReference type="Pfam" id="PF14805">
    <property type="entry name" value="THDPS_N_2"/>
    <property type="match status" value="1"/>
</dbReference>
<dbReference type="SUPFAM" id="SSF51161">
    <property type="entry name" value="Trimeric LpxA-like enzymes"/>
    <property type="match status" value="1"/>
</dbReference>
<dbReference type="PROSITE" id="PS00101">
    <property type="entry name" value="HEXAPEP_TRANSFERASES"/>
    <property type="match status" value="1"/>
</dbReference>
<evidence type="ECO:0000255" key="1">
    <source>
        <dbReference type="HAMAP-Rule" id="MF_00811"/>
    </source>
</evidence>
<feature type="chain" id="PRO_0000196918" description="2,3,4,5-tetrahydropyridine-2,6-dicarboxylate N-succinyltransferase">
    <location>
        <begin position="1"/>
        <end position="273"/>
    </location>
</feature>
<feature type="binding site" evidence="1">
    <location>
        <position position="105"/>
    </location>
    <ligand>
        <name>substrate</name>
    </ligand>
</feature>
<feature type="binding site" evidence="1">
    <location>
        <position position="142"/>
    </location>
    <ligand>
        <name>substrate</name>
    </ligand>
</feature>
<comment type="catalytic activity">
    <reaction evidence="1">
        <text>(S)-2,3,4,5-tetrahydrodipicolinate + succinyl-CoA + H2O = (S)-2-succinylamino-6-oxoheptanedioate + CoA</text>
        <dbReference type="Rhea" id="RHEA:17325"/>
        <dbReference type="ChEBI" id="CHEBI:15377"/>
        <dbReference type="ChEBI" id="CHEBI:15685"/>
        <dbReference type="ChEBI" id="CHEBI:16845"/>
        <dbReference type="ChEBI" id="CHEBI:57287"/>
        <dbReference type="ChEBI" id="CHEBI:57292"/>
        <dbReference type="EC" id="2.3.1.117"/>
    </reaction>
</comment>
<comment type="pathway">
    <text evidence="1">Amino-acid biosynthesis; L-lysine biosynthesis via DAP pathway; LL-2,6-diaminopimelate from (S)-tetrahydrodipicolinate (succinylase route): step 1/3.</text>
</comment>
<comment type="subunit">
    <text evidence="1">Homotrimer.</text>
</comment>
<comment type="subcellular location">
    <subcellularLocation>
        <location evidence="1">Cytoplasm</location>
    </subcellularLocation>
</comment>
<comment type="similarity">
    <text evidence="1">Belongs to the transferase hexapeptide repeat family.</text>
</comment>
<protein>
    <recommendedName>
        <fullName evidence="1">2,3,4,5-tetrahydropyridine-2,6-dicarboxylate N-succinyltransferase</fullName>
        <ecNumber evidence="1">2.3.1.117</ecNumber>
    </recommendedName>
    <alternativeName>
        <fullName evidence="1">Tetrahydrodipicolinate N-succinyltransferase</fullName>
        <shortName evidence="1">THDP succinyltransferase</shortName>
        <shortName evidence="1">THP succinyltransferase</shortName>
        <shortName evidence="1">Tetrahydropicolinate succinylase</shortName>
    </alternativeName>
</protein>
<name>DAPD_BORPE</name>
<organism>
    <name type="scientific">Bordetella pertussis (strain Tohama I / ATCC BAA-589 / NCTC 13251)</name>
    <dbReference type="NCBI Taxonomy" id="257313"/>
    <lineage>
        <taxon>Bacteria</taxon>
        <taxon>Pseudomonadati</taxon>
        <taxon>Pseudomonadota</taxon>
        <taxon>Betaproteobacteria</taxon>
        <taxon>Burkholderiales</taxon>
        <taxon>Alcaligenaceae</taxon>
        <taxon>Bordetella</taxon>
    </lineage>
</organism>
<proteinExistence type="inferred from homology"/>
<keyword id="KW-0012">Acyltransferase</keyword>
<keyword id="KW-0028">Amino-acid biosynthesis</keyword>
<keyword id="KW-0963">Cytoplasm</keyword>
<keyword id="KW-0220">Diaminopimelate biosynthesis</keyword>
<keyword id="KW-0457">Lysine biosynthesis</keyword>
<keyword id="KW-1185">Reference proteome</keyword>
<keyword id="KW-0677">Repeat</keyword>
<keyword id="KW-0808">Transferase</keyword>
<accession>P0A4U8</accession>
<accession>Q9ZEX2</accession>
<reference key="1">
    <citation type="journal article" date="2000" name="J. Bacteriol.">
        <title>Characterization of a Bordetella pertussis diaminopimelate (DAP) biosynthesis locus identifies dapC, a novel gene coding for an N-succinyl-L,L-DAP aminotransferase.</title>
        <authorList>
            <person name="Fuchs T.M."/>
            <person name="Schneider B."/>
            <person name="Krumbach K."/>
            <person name="Eggeling L."/>
            <person name="Gross R."/>
        </authorList>
    </citation>
    <scope>NUCLEOTIDE SEQUENCE [GENOMIC DNA]</scope>
    <source>
        <strain>Tohama I / ATCC BAA-589 / NCTC 13251</strain>
    </source>
</reference>
<reference key="2">
    <citation type="journal article" date="2003" name="Nat. Genet.">
        <title>Comparative analysis of the genome sequences of Bordetella pertussis, Bordetella parapertussis and Bordetella bronchiseptica.</title>
        <authorList>
            <person name="Parkhill J."/>
            <person name="Sebaihia M."/>
            <person name="Preston A."/>
            <person name="Murphy L.D."/>
            <person name="Thomson N.R."/>
            <person name="Harris D.E."/>
            <person name="Holden M.T.G."/>
            <person name="Churcher C.M."/>
            <person name="Bentley S.D."/>
            <person name="Mungall K.L."/>
            <person name="Cerdeno-Tarraga A.-M."/>
            <person name="Temple L."/>
            <person name="James K.D."/>
            <person name="Harris B."/>
            <person name="Quail M.A."/>
            <person name="Achtman M."/>
            <person name="Atkin R."/>
            <person name="Baker S."/>
            <person name="Basham D."/>
            <person name="Bason N."/>
            <person name="Cherevach I."/>
            <person name="Chillingworth T."/>
            <person name="Collins M."/>
            <person name="Cronin A."/>
            <person name="Davis P."/>
            <person name="Doggett J."/>
            <person name="Feltwell T."/>
            <person name="Goble A."/>
            <person name="Hamlin N."/>
            <person name="Hauser H."/>
            <person name="Holroyd S."/>
            <person name="Jagels K."/>
            <person name="Leather S."/>
            <person name="Moule S."/>
            <person name="Norberczak H."/>
            <person name="O'Neil S."/>
            <person name="Ormond D."/>
            <person name="Price C."/>
            <person name="Rabbinowitsch E."/>
            <person name="Rutter S."/>
            <person name="Sanders M."/>
            <person name="Saunders D."/>
            <person name="Seeger K."/>
            <person name="Sharp S."/>
            <person name="Simmonds M."/>
            <person name="Skelton J."/>
            <person name="Squares R."/>
            <person name="Squares S."/>
            <person name="Stevens K."/>
            <person name="Unwin L."/>
            <person name="Whitehead S."/>
            <person name="Barrell B.G."/>
            <person name="Maskell D.J."/>
        </authorList>
    </citation>
    <scope>NUCLEOTIDE SEQUENCE [LARGE SCALE GENOMIC DNA]</scope>
    <source>
        <strain>Tohama I / ATCC BAA-589 / NCTC 13251</strain>
    </source>
</reference>